<protein>
    <recommendedName>
        <fullName>14-3-3-like protein GF14 chi</fullName>
    </recommendedName>
    <alternativeName>
        <fullName>General regulatory factor 1</fullName>
    </alternativeName>
</protein>
<feature type="initiator methionine" description="Removed" evidence="8">
    <location>
        <position position="1"/>
    </location>
</feature>
<feature type="chain" id="PRO_0000058663" description="14-3-3-like protein GF14 chi">
    <location>
        <begin position="2"/>
        <end position="267"/>
    </location>
</feature>
<feature type="modified residue" description="N-acetylalanine" evidence="8">
    <location>
        <position position="2"/>
    </location>
</feature>
<feature type="modified residue" description="Phosphoserine" evidence="1">
    <location>
        <position position="72"/>
    </location>
</feature>
<feature type="modified residue" description="Phosphoserine" evidence="1">
    <location>
        <position position="195"/>
    </location>
</feature>
<feature type="modified residue" description="Phosphothreonine" evidence="1">
    <location>
        <position position="216"/>
    </location>
</feature>
<feature type="modified residue" description="Phosphoserine" evidence="7">
    <location>
        <position position="267"/>
    </location>
</feature>
<feature type="sequence conflict" description="In Ref. 1; AAA96323 and 3; AAA96254." evidence="6" ref="1 3">
    <original>T</original>
    <variation>A</variation>
    <location>
        <position position="240"/>
    </location>
</feature>
<organism>
    <name type="scientific">Arabidopsis thaliana</name>
    <name type="common">Mouse-ear cress</name>
    <dbReference type="NCBI Taxonomy" id="3702"/>
    <lineage>
        <taxon>Eukaryota</taxon>
        <taxon>Viridiplantae</taxon>
        <taxon>Streptophyta</taxon>
        <taxon>Embryophyta</taxon>
        <taxon>Tracheophyta</taxon>
        <taxon>Spermatophyta</taxon>
        <taxon>Magnoliopsida</taxon>
        <taxon>eudicotyledons</taxon>
        <taxon>Gunneridae</taxon>
        <taxon>Pentapetalae</taxon>
        <taxon>rosids</taxon>
        <taxon>malvids</taxon>
        <taxon>Brassicales</taxon>
        <taxon>Brassicaceae</taxon>
        <taxon>Camelineae</taxon>
        <taxon>Arabidopsis</taxon>
    </lineage>
</organism>
<gene>
    <name type="primary">GRF1</name>
    <name type="ordered locus">At4g09000</name>
    <name type="ORF">F23J3.30</name>
</gene>
<dbReference type="EMBL" id="L09112">
    <property type="protein sequence ID" value="AAA96323.1"/>
    <property type="molecule type" value="mRNA"/>
</dbReference>
<dbReference type="EMBL" id="U09377">
    <property type="protein sequence ID" value="AAA96254.1"/>
    <property type="molecule type" value="Genomic_DNA"/>
</dbReference>
<dbReference type="EMBL" id="AL161513">
    <property type="protein sequence ID" value="CAB78024.1"/>
    <property type="molecule type" value="Genomic_DNA"/>
</dbReference>
<dbReference type="EMBL" id="CP002687">
    <property type="protein sequence ID" value="AEE82709.1"/>
    <property type="molecule type" value="Genomic_DNA"/>
</dbReference>
<dbReference type="EMBL" id="AF412067">
    <property type="protein sequence ID" value="AAL06520.1"/>
    <property type="molecule type" value="mRNA"/>
</dbReference>
<dbReference type="EMBL" id="AY065064">
    <property type="protein sequence ID" value="AAL57697.1"/>
    <property type="molecule type" value="mRNA"/>
</dbReference>
<dbReference type="EMBL" id="AY086143">
    <property type="protein sequence ID" value="AAM63348.1"/>
    <property type="molecule type" value="mRNA"/>
</dbReference>
<dbReference type="EMBL" id="BT024489">
    <property type="protein sequence ID" value="ABD19670.1"/>
    <property type="molecule type" value="mRNA"/>
</dbReference>
<dbReference type="PIR" id="H85090">
    <property type="entry name" value="H85090"/>
</dbReference>
<dbReference type="PIR" id="S57276">
    <property type="entry name" value="S57276"/>
</dbReference>
<dbReference type="RefSeq" id="NP_567344.1">
    <molecule id="P42643-1"/>
    <property type="nucleotide sequence ID" value="NM_116969.3"/>
</dbReference>
<dbReference type="SMR" id="P42643"/>
<dbReference type="BioGRID" id="11778">
    <property type="interactions" value="230"/>
</dbReference>
<dbReference type="FunCoup" id="P42643">
    <property type="interactions" value="3854"/>
</dbReference>
<dbReference type="IntAct" id="P42643">
    <property type="interactions" value="7"/>
</dbReference>
<dbReference type="STRING" id="3702.P42643"/>
<dbReference type="GlyGen" id="P42643">
    <property type="glycosylation" value="1 site"/>
</dbReference>
<dbReference type="iPTMnet" id="P42643"/>
<dbReference type="ProteomicsDB" id="245154">
    <molecule id="P42643-1"/>
</dbReference>
<dbReference type="EnsemblPlants" id="AT4G09000.1">
    <molecule id="P42643-1"/>
    <property type="protein sequence ID" value="AT4G09000.1"/>
    <property type="gene ID" value="AT4G09000"/>
</dbReference>
<dbReference type="GeneID" id="826479"/>
<dbReference type="Gramene" id="AT4G09000.1">
    <molecule id="P42643-1"/>
    <property type="protein sequence ID" value="AT4G09000.1"/>
    <property type="gene ID" value="AT4G09000"/>
</dbReference>
<dbReference type="KEGG" id="ath:AT4G09000"/>
<dbReference type="Araport" id="AT4G09000"/>
<dbReference type="TAIR" id="AT4G09000">
    <property type="gene designation" value="GRF1"/>
</dbReference>
<dbReference type="HOGENOM" id="CLU_058290_0_0_1"/>
<dbReference type="InParanoid" id="P42643"/>
<dbReference type="OMA" id="VKNIRAC"/>
<dbReference type="OrthoDB" id="10260625at2759"/>
<dbReference type="PhylomeDB" id="P42643"/>
<dbReference type="PRO" id="PR:P42643"/>
<dbReference type="Proteomes" id="UP000006548">
    <property type="component" value="Chromosome 4"/>
</dbReference>
<dbReference type="ExpressionAtlas" id="P42643">
    <property type="expression patterns" value="baseline and differential"/>
</dbReference>
<dbReference type="GO" id="GO:0005737">
    <property type="term" value="C:cytoplasm"/>
    <property type="evidence" value="ECO:0007669"/>
    <property type="project" value="UniProtKB-SubCell"/>
</dbReference>
<dbReference type="GO" id="GO:0005634">
    <property type="term" value="C:nucleus"/>
    <property type="evidence" value="ECO:0007669"/>
    <property type="project" value="UniProtKB-SubCell"/>
</dbReference>
<dbReference type="GO" id="GO:0019222">
    <property type="term" value="P:regulation of metabolic process"/>
    <property type="evidence" value="ECO:0000315"/>
    <property type="project" value="UniProtKB"/>
</dbReference>
<dbReference type="FunFam" id="1.20.190.20:FF:000002">
    <property type="entry name" value="14-3-3 protein epsilon"/>
    <property type="match status" value="1"/>
</dbReference>
<dbReference type="Gene3D" id="1.20.190.20">
    <property type="entry name" value="14-3-3 domain"/>
    <property type="match status" value="1"/>
</dbReference>
<dbReference type="InterPro" id="IPR000308">
    <property type="entry name" value="14-3-3"/>
</dbReference>
<dbReference type="InterPro" id="IPR023409">
    <property type="entry name" value="14-3-3_CS"/>
</dbReference>
<dbReference type="InterPro" id="IPR036815">
    <property type="entry name" value="14-3-3_dom_sf"/>
</dbReference>
<dbReference type="InterPro" id="IPR023410">
    <property type="entry name" value="14-3-3_domain"/>
</dbReference>
<dbReference type="PANTHER" id="PTHR18860">
    <property type="entry name" value="14-3-3 PROTEIN"/>
    <property type="match status" value="1"/>
</dbReference>
<dbReference type="Pfam" id="PF00244">
    <property type="entry name" value="14-3-3"/>
    <property type="match status" value="1"/>
</dbReference>
<dbReference type="PIRSF" id="PIRSF000868">
    <property type="entry name" value="14-3-3"/>
    <property type="match status" value="1"/>
</dbReference>
<dbReference type="PRINTS" id="PR00305">
    <property type="entry name" value="1433ZETA"/>
</dbReference>
<dbReference type="SMART" id="SM00101">
    <property type="entry name" value="14_3_3"/>
    <property type="match status" value="1"/>
</dbReference>
<dbReference type="SUPFAM" id="SSF48445">
    <property type="entry name" value="14-3-3 protein"/>
    <property type="match status" value="1"/>
</dbReference>
<dbReference type="PROSITE" id="PS00796">
    <property type="entry name" value="1433_1"/>
    <property type="match status" value="1"/>
</dbReference>
<dbReference type="PROSITE" id="PS00797">
    <property type="entry name" value="1433_2"/>
    <property type="match status" value="1"/>
</dbReference>
<evidence type="ECO:0000250" key="1">
    <source>
        <dbReference type="UniProtKB" id="P48349"/>
    </source>
</evidence>
<evidence type="ECO:0000269" key="2">
    <source>
    </source>
</evidence>
<evidence type="ECO:0000269" key="3">
    <source>
    </source>
</evidence>
<evidence type="ECO:0000269" key="4">
    <source>
    </source>
</evidence>
<evidence type="ECO:0000269" key="5">
    <source>
    </source>
</evidence>
<evidence type="ECO:0000305" key="6"/>
<evidence type="ECO:0007744" key="7">
    <source>
    </source>
</evidence>
<evidence type="ECO:0007744" key="8">
    <source>
    </source>
</evidence>
<sequence>MATPGASSARDEFVYMAKLAEQAERYEEMVEFMEKVAKAVDKDELTVEERNLLSVAYKNVIGARRASWRIISSIEQKEESRGNDDHVSLIRDYRSKIETELSDICDGILKLLDTILVPAAASGDSKVFYLKMKGDYHRYLAEFKSGQERKDAAEHTLTAYKAAQDIANSELAPTHPIRLGLALNFSVFYYEILNSPDRACNLAKQAFDEAIAELDTLGEESYKDSTLIMQLLRDNLTLWTSDMQDDVADDIKEAAPAAAKPADEQQS</sequence>
<keyword id="KW-0007">Acetylation</keyword>
<keyword id="KW-0025">Alternative splicing</keyword>
<keyword id="KW-0963">Cytoplasm</keyword>
<keyword id="KW-0539">Nucleus</keyword>
<keyword id="KW-0597">Phosphoprotein</keyword>
<keyword id="KW-1185">Reference proteome</keyword>
<reference key="1">
    <citation type="journal article" date="1994" name="Plant Physiol.">
        <title>Five cDNAs encoding Arabidopsis GF14 proteins.</title>
        <authorList>
            <person name="Lu G."/>
            <person name="Rooney M.F."/>
            <person name="Wu K."/>
            <person name="Ferl R.J."/>
        </authorList>
    </citation>
    <scope>NUCLEOTIDE SEQUENCE [MRNA]</scope>
    <source>
        <strain>cv. Columbia</strain>
    </source>
</reference>
<reference key="2">
    <citation type="submission" date="1996-04" db="EMBL/GenBank/DDBJ databases">
        <authorList>
            <person name="Ferl R.J."/>
            <person name="Lu G."/>
        </authorList>
    </citation>
    <scope>SEQUENCE REVISION TO N-TERMINUS</scope>
</reference>
<reference key="3">
    <citation type="journal article" date="1995" name="Plant Physiol.">
        <title>Sequences of three Arabidopsis general regulatory factor genes encoding GF14 (14-3-3) proteins.</title>
        <authorList>
            <person name="Rooney M.F."/>
            <person name="Ferl R.J."/>
        </authorList>
    </citation>
    <scope>NUCLEOTIDE SEQUENCE [GENOMIC DNA]</scope>
    <source>
        <strain>cv. Columbia</strain>
    </source>
</reference>
<reference key="4">
    <citation type="journal article" date="1999" name="Nature">
        <title>Sequence and analysis of chromosome 4 of the plant Arabidopsis thaliana.</title>
        <authorList>
            <person name="Mayer K.F.X."/>
            <person name="Schueller C."/>
            <person name="Wambutt R."/>
            <person name="Murphy G."/>
            <person name="Volckaert G."/>
            <person name="Pohl T."/>
            <person name="Duesterhoeft A."/>
            <person name="Stiekema W."/>
            <person name="Entian K.-D."/>
            <person name="Terryn N."/>
            <person name="Harris B."/>
            <person name="Ansorge W."/>
            <person name="Brandt P."/>
            <person name="Grivell L.A."/>
            <person name="Rieger M."/>
            <person name="Weichselgartner M."/>
            <person name="de Simone V."/>
            <person name="Obermaier B."/>
            <person name="Mache R."/>
            <person name="Mueller M."/>
            <person name="Kreis M."/>
            <person name="Delseny M."/>
            <person name="Puigdomenech P."/>
            <person name="Watson M."/>
            <person name="Schmidtheini T."/>
            <person name="Reichert B."/>
            <person name="Portetelle D."/>
            <person name="Perez-Alonso M."/>
            <person name="Boutry M."/>
            <person name="Bancroft I."/>
            <person name="Vos P."/>
            <person name="Hoheisel J."/>
            <person name="Zimmermann W."/>
            <person name="Wedler H."/>
            <person name="Ridley P."/>
            <person name="Langham S.-A."/>
            <person name="McCullagh B."/>
            <person name="Bilham L."/>
            <person name="Robben J."/>
            <person name="van der Schueren J."/>
            <person name="Grymonprez B."/>
            <person name="Chuang Y.-J."/>
            <person name="Vandenbussche F."/>
            <person name="Braeken M."/>
            <person name="Weltjens I."/>
            <person name="Voet M."/>
            <person name="Bastiaens I."/>
            <person name="Aert R."/>
            <person name="Defoor E."/>
            <person name="Weitzenegger T."/>
            <person name="Bothe G."/>
            <person name="Ramsperger U."/>
            <person name="Hilbert H."/>
            <person name="Braun M."/>
            <person name="Holzer E."/>
            <person name="Brandt A."/>
            <person name="Peters S."/>
            <person name="van Staveren M."/>
            <person name="Dirkse W."/>
            <person name="Mooijman P."/>
            <person name="Klein Lankhorst R."/>
            <person name="Rose M."/>
            <person name="Hauf J."/>
            <person name="Koetter P."/>
            <person name="Berneiser S."/>
            <person name="Hempel S."/>
            <person name="Feldpausch M."/>
            <person name="Lamberth S."/>
            <person name="Van den Daele H."/>
            <person name="De Keyser A."/>
            <person name="Buysshaert C."/>
            <person name="Gielen J."/>
            <person name="Villarroel R."/>
            <person name="De Clercq R."/>
            <person name="van Montagu M."/>
            <person name="Rogers J."/>
            <person name="Cronin A."/>
            <person name="Quail M.A."/>
            <person name="Bray-Allen S."/>
            <person name="Clark L."/>
            <person name="Doggett J."/>
            <person name="Hall S."/>
            <person name="Kay M."/>
            <person name="Lennard N."/>
            <person name="McLay K."/>
            <person name="Mayes R."/>
            <person name="Pettett A."/>
            <person name="Rajandream M.A."/>
            <person name="Lyne M."/>
            <person name="Benes V."/>
            <person name="Rechmann S."/>
            <person name="Borkova D."/>
            <person name="Bloecker H."/>
            <person name="Scharfe M."/>
            <person name="Grimm M."/>
            <person name="Loehnert T.-H."/>
            <person name="Dose S."/>
            <person name="de Haan M."/>
            <person name="Maarse A.C."/>
            <person name="Schaefer M."/>
            <person name="Mueller-Auer S."/>
            <person name="Gabel C."/>
            <person name="Fuchs M."/>
            <person name="Fartmann B."/>
            <person name="Granderath K."/>
            <person name="Dauner D."/>
            <person name="Herzl A."/>
            <person name="Neumann S."/>
            <person name="Argiriou A."/>
            <person name="Vitale D."/>
            <person name="Liguori R."/>
            <person name="Piravandi E."/>
            <person name="Massenet O."/>
            <person name="Quigley F."/>
            <person name="Clabauld G."/>
            <person name="Muendlein A."/>
            <person name="Felber R."/>
            <person name="Schnabl S."/>
            <person name="Hiller R."/>
            <person name="Schmidt W."/>
            <person name="Lecharny A."/>
            <person name="Aubourg S."/>
            <person name="Chefdor F."/>
            <person name="Cooke R."/>
            <person name="Berger C."/>
            <person name="Monfort A."/>
            <person name="Casacuberta E."/>
            <person name="Gibbons T."/>
            <person name="Weber N."/>
            <person name="Vandenbol M."/>
            <person name="Bargues M."/>
            <person name="Terol J."/>
            <person name="Torres A."/>
            <person name="Perez-Perez A."/>
            <person name="Purnelle B."/>
            <person name="Bent E."/>
            <person name="Johnson S."/>
            <person name="Tacon D."/>
            <person name="Jesse T."/>
            <person name="Heijnen L."/>
            <person name="Schwarz S."/>
            <person name="Scholler P."/>
            <person name="Heber S."/>
            <person name="Francs P."/>
            <person name="Bielke C."/>
            <person name="Frishman D."/>
            <person name="Haase D."/>
            <person name="Lemcke K."/>
            <person name="Mewes H.-W."/>
            <person name="Stocker S."/>
            <person name="Zaccaria P."/>
            <person name="Bevan M."/>
            <person name="Wilson R.K."/>
            <person name="de la Bastide M."/>
            <person name="Habermann K."/>
            <person name="Parnell L."/>
            <person name="Dedhia N."/>
            <person name="Gnoj L."/>
            <person name="Schutz K."/>
            <person name="Huang E."/>
            <person name="Spiegel L."/>
            <person name="Sekhon M."/>
            <person name="Murray J."/>
            <person name="Sheet P."/>
            <person name="Cordes M."/>
            <person name="Abu-Threideh J."/>
            <person name="Stoneking T."/>
            <person name="Kalicki J."/>
            <person name="Graves T."/>
            <person name="Harmon G."/>
            <person name="Edwards J."/>
            <person name="Latreille P."/>
            <person name="Courtney L."/>
            <person name="Cloud J."/>
            <person name="Abbott A."/>
            <person name="Scott K."/>
            <person name="Johnson D."/>
            <person name="Minx P."/>
            <person name="Bentley D."/>
            <person name="Fulton B."/>
            <person name="Miller N."/>
            <person name="Greco T."/>
            <person name="Kemp K."/>
            <person name="Kramer J."/>
            <person name="Fulton L."/>
            <person name="Mardis E."/>
            <person name="Dante M."/>
            <person name="Pepin K."/>
            <person name="Hillier L.W."/>
            <person name="Nelson J."/>
            <person name="Spieth J."/>
            <person name="Ryan E."/>
            <person name="Andrews S."/>
            <person name="Geisel C."/>
            <person name="Layman D."/>
            <person name="Du H."/>
            <person name="Ali J."/>
            <person name="Berghoff A."/>
            <person name="Jones K."/>
            <person name="Drone K."/>
            <person name="Cotton M."/>
            <person name="Joshu C."/>
            <person name="Antonoiu B."/>
            <person name="Zidanic M."/>
            <person name="Strong C."/>
            <person name="Sun H."/>
            <person name="Lamar B."/>
            <person name="Yordan C."/>
            <person name="Ma P."/>
            <person name="Zhong J."/>
            <person name="Preston R."/>
            <person name="Vil D."/>
            <person name="Shekher M."/>
            <person name="Matero A."/>
            <person name="Shah R."/>
            <person name="Swaby I.K."/>
            <person name="O'Shaughnessy A."/>
            <person name="Rodriguez M."/>
            <person name="Hoffman J."/>
            <person name="Till S."/>
            <person name="Granat S."/>
            <person name="Shohdy N."/>
            <person name="Hasegawa A."/>
            <person name="Hameed A."/>
            <person name="Lodhi M."/>
            <person name="Johnson A."/>
            <person name="Chen E."/>
            <person name="Marra M.A."/>
            <person name="Martienssen R."/>
            <person name="McCombie W.R."/>
        </authorList>
    </citation>
    <scope>NUCLEOTIDE SEQUENCE [LARGE SCALE GENOMIC DNA]</scope>
    <source>
        <strain>cv. Columbia</strain>
    </source>
</reference>
<reference key="5">
    <citation type="journal article" date="2017" name="Plant J.">
        <title>Araport11: a complete reannotation of the Arabidopsis thaliana reference genome.</title>
        <authorList>
            <person name="Cheng C.Y."/>
            <person name="Krishnakumar V."/>
            <person name="Chan A.P."/>
            <person name="Thibaud-Nissen F."/>
            <person name="Schobel S."/>
            <person name="Town C.D."/>
        </authorList>
    </citation>
    <scope>GENOME REANNOTATION</scope>
    <source>
        <strain>cv. Columbia</strain>
    </source>
</reference>
<reference key="6">
    <citation type="journal article" date="2003" name="Science">
        <title>Empirical analysis of transcriptional activity in the Arabidopsis genome.</title>
        <authorList>
            <person name="Yamada K."/>
            <person name="Lim J."/>
            <person name="Dale J.M."/>
            <person name="Chen H."/>
            <person name="Shinn P."/>
            <person name="Palm C.J."/>
            <person name="Southwick A.M."/>
            <person name="Wu H.C."/>
            <person name="Kim C.J."/>
            <person name="Nguyen M."/>
            <person name="Pham P.K."/>
            <person name="Cheuk R.F."/>
            <person name="Karlin-Newmann G."/>
            <person name="Liu S.X."/>
            <person name="Lam B."/>
            <person name="Sakano H."/>
            <person name="Wu T."/>
            <person name="Yu G."/>
            <person name="Miranda M."/>
            <person name="Quach H.L."/>
            <person name="Tripp M."/>
            <person name="Chang C.H."/>
            <person name="Lee J.M."/>
            <person name="Toriumi M.J."/>
            <person name="Chan M.M."/>
            <person name="Tang C.C."/>
            <person name="Onodera C.S."/>
            <person name="Deng J.M."/>
            <person name="Akiyama K."/>
            <person name="Ansari Y."/>
            <person name="Arakawa T."/>
            <person name="Banh J."/>
            <person name="Banno F."/>
            <person name="Bowser L."/>
            <person name="Brooks S.Y."/>
            <person name="Carninci P."/>
            <person name="Chao Q."/>
            <person name="Choy N."/>
            <person name="Enju A."/>
            <person name="Goldsmith A.D."/>
            <person name="Gurjal M."/>
            <person name="Hansen N.F."/>
            <person name="Hayashizaki Y."/>
            <person name="Johnson-Hopson C."/>
            <person name="Hsuan V.W."/>
            <person name="Iida K."/>
            <person name="Karnes M."/>
            <person name="Khan S."/>
            <person name="Koesema E."/>
            <person name="Ishida J."/>
            <person name="Jiang P.X."/>
            <person name="Jones T."/>
            <person name="Kawai J."/>
            <person name="Kamiya A."/>
            <person name="Meyers C."/>
            <person name="Nakajima M."/>
            <person name="Narusaka M."/>
            <person name="Seki M."/>
            <person name="Sakurai T."/>
            <person name="Satou M."/>
            <person name="Tamse R."/>
            <person name="Vaysberg M."/>
            <person name="Wallender E.K."/>
            <person name="Wong C."/>
            <person name="Yamamura Y."/>
            <person name="Yuan S."/>
            <person name="Shinozaki K."/>
            <person name="Davis R.W."/>
            <person name="Theologis A."/>
            <person name="Ecker J.R."/>
        </authorList>
    </citation>
    <scope>NUCLEOTIDE SEQUENCE [LARGE SCALE MRNA]</scope>
    <source>
        <strain>cv. Columbia</strain>
    </source>
</reference>
<reference key="7">
    <citation type="submission" date="2002-03" db="EMBL/GenBank/DDBJ databases">
        <title>Full-length cDNA from Arabidopsis thaliana.</title>
        <authorList>
            <person name="Brover V.V."/>
            <person name="Troukhan M.E."/>
            <person name="Alexandrov N.A."/>
            <person name="Lu Y.-P."/>
            <person name="Flavell R.B."/>
            <person name="Feldmann K.A."/>
        </authorList>
    </citation>
    <scope>NUCLEOTIDE SEQUENCE [LARGE SCALE MRNA]</scope>
</reference>
<reference key="8">
    <citation type="submission" date="2006-02" db="EMBL/GenBank/DDBJ databases">
        <title>Arabidopsis ORF clones.</title>
        <authorList>
            <person name="Shinn P."/>
            <person name="Chen H."/>
            <person name="Kim C.J."/>
            <person name="Ecker J.R."/>
        </authorList>
    </citation>
    <scope>NUCLEOTIDE SEQUENCE [LARGE SCALE MRNA]</scope>
    <source>
        <strain>cv. Columbia</strain>
    </source>
</reference>
<reference key="9">
    <citation type="journal article" date="2007" name="Plant J.">
        <title>TPK1, a Ca(2+)-regulated Arabidopsis vacuole two-pore K(+) channel is activated by 14-3-3 proteins.</title>
        <authorList>
            <person name="Latz A."/>
            <person name="Becker D."/>
            <person name="Hekman M."/>
            <person name="Mueller T."/>
            <person name="Beyhl D."/>
            <person name="Marten I."/>
            <person name="Eing C."/>
            <person name="Fischer A."/>
            <person name="Dunkel M."/>
            <person name="Bertl A."/>
            <person name="Rapp U.R."/>
            <person name="Hedrich R."/>
        </authorList>
    </citation>
    <scope>INTERACTION WITH TPK1</scope>
</reference>
<reference key="10">
    <citation type="journal article" date="2008" name="J. Proteome Res.">
        <title>Site-specific phosphorylation profiling of Arabidopsis proteins by mass spectrometry and peptide chip analysis.</title>
        <authorList>
            <person name="de la Fuente van Bentem S."/>
            <person name="Anrather D."/>
            <person name="Dohnal I."/>
            <person name="Roitinger E."/>
            <person name="Csaszar E."/>
            <person name="Joore J."/>
            <person name="Buijnink J."/>
            <person name="Carreri A."/>
            <person name="Forzani C."/>
            <person name="Lorkovic Z.J."/>
            <person name="Barta A."/>
            <person name="Lecourieux D."/>
            <person name="Verhounig A."/>
            <person name="Jonak C."/>
            <person name="Hirt H."/>
        </authorList>
    </citation>
    <scope>IDENTIFICATION BY MASS SPECTROMETRY [LARGE SCALE ANALYSIS]</scope>
    <source>
        <tissue>Root</tissue>
    </source>
</reference>
<reference key="11">
    <citation type="journal article" date="2009" name="Plant Physiol.">
        <title>Large-scale Arabidopsis phosphoproteome profiling reveals novel chloroplast kinase substrates and phosphorylation networks.</title>
        <authorList>
            <person name="Reiland S."/>
            <person name="Messerli G."/>
            <person name="Baerenfaller K."/>
            <person name="Gerrits B."/>
            <person name="Endler A."/>
            <person name="Grossmann J."/>
            <person name="Gruissem W."/>
            <person name="Baginsky S."/>
        </authorList>
    </citation>
    <scope>PHOSPHORYLATION [LARGE SCALE ANALYSIS] AT SER-267</scope>
    <scope>IDENTIFICATION BY MASS SPECTROMETRY [LARGE SCALE ANALYSIS]</scope>
</reference>
<reference key="12">
    <citation type="journal article" date="2011" name="BMC Syst. Biol.">
        <title>Determining novel functions of Arabidopsis 14-3-3 proteins in central metabolic processes.</title>
        <authorList>
            <person name="Diaz C."/>
            <person name="Kusano M."/>
            <person name="Sulpice R."/>
            <person name="Araki M."/>
            <person name="Redestig H."/>
            <person name="Saito K."/>
            <person name="Stitt M."/>
            <person name="Shin R."/>
        </authorList>
    </citation>
    <scope>FUNCTION</scope>
    <scope>DISRUPTION PHENOTYPE</scope>
    <scope>INTERACTION WITH IDH3; MDH1 AND MDH2</scope>
</reference>
<reference key="13">
    <citation type="journal article" date="2012" name="Mol. Cell. Proteomics">
        <title>Comparative large-scale characterisation of plant vs. mammal proteins reveals similar and idiosyncratic N-alpha acetylation features.</title>
        <authorList>
            <person name="Bienvenut W.V."/>
            <person name="Sumpton D."/>
            <person name="Martinez A."/>
            <person name="Lilla S."/>
            <person name="Espagne C."/>
            <person name="Meinnel T."/>
            <person name="Giglione C."/>
        </authorList>
    </citation>
    <scope>ACETYLATION [LARGE SCALE ANALYSIS] AT ALA-2</scope>
    <scope>CLEAVAGE OF INITIATOR METHIONINE [LARGE SCALE ANALYSIS]</scope>
    <scope>IDENTIFICATION BY MASS SPECTROMETRY [LARGE SCALE ANALYSIS]</scope>
</reference>
<reference key="14">
    <citation type="journal article" date="2014" name="Plant J.">
        <title>Light modulated activity of root alkaline/neutral invertase involves the interaction with 14-3-3 proteins.</title>
        <authorList>
            <person name="Gao J."/>
            <person name="van Kleeff P.J."/>
            <person name="Oecking C."/>
            <person name="Li K.W."/>
            <person name="Erban A."/>
            <person name="Kopka J."/>
            <person name="Hincha D.K."/>
            <person name="de Boer A.H."/>
        </authorList>
    </citation>
    <scope>INTERACTION WITH CINV1</scope>
</reference>
<reference key="15">
    <citation type="journal article" date="2017" name="Mol. Cell">
        <title>Plasma membrane CRPK1-mediated phosphorylation of 14-3-3 proteins induces their nuclear import to fine-tune CBF signaling during cold response.</title>
        <authorList>
            <person name="Liu Z."/>
            <person name="Jia Y."/>
            <person name="Ding Y."/>
            <person name="Shi Y."/>
            <person name="Li Z."/>
            <person name="Guo Y."/>
            <person name="Gong Z."/>
            <person name="Yang S."/>
        </authorList>
    </citation>
    <scope>INTERACTION WITH DREB1A AND DREB1B</scope>
    <source>
        <strain>cv. Columbia</strain>
    </source>
</reference>
<comment type="function">
    <text evidence="3">Is associated with a DNA binding complex that binds to the G box, a well-characterized cis-acting DNA regulatory element found in plant genes. Involved in the regulation of nutrient metabolism (PubMed:22104211).</text>
</comment>
<comment type="subunit">
    <text evidence="2 3 4 5">Interacts with TPK1 (PubMed:17764516). Interacts with the isocitrate dehydrogenase IDH3, and malate dehydrogenases MDH1 and MDH2 (PubMed:22104211). Interacts with DREB1A and DREB1B in the nucleus (PubMed:28344081). Interacts with CINV1 (PubMed:25256212).</text>
</comment>
<comment type="subcellular location">
    <subcellularLocation>
        <location evidence="1">Nucleus</location>
    </subcellularLocation>
    <subcellularLocation>
        <location evidence="1">Cytoplasm</location>
    </subcellularLocation>
    <text evidence="1">Translocates from the cytosol to the nucleus when phosphorylated.</text>
</comment>
<comment type="alternative products">
    <event type="alternative splicing"/>
    <isoform>
        <id>P42643-1</id>
        <name>1</name>
        <sequence type="displayed"/>
    </isoform>
    <text>A number of isoforms are produced. According to EST sequences.</text>
</comment>
<comment type="disruption phenotype">
    <text evidence="3">Disturbed levels of several metabolites (e.g. beta-alanine, aspartate, pyroglutamate, glutamate, glutamine, alpha-ketoglutarate, palmitate and shikimate).</text>
</comment>
<comment type="similarity">
    <text evidence="6">Belongs to the 14-3-3 family.</text>
</comment>
<name>14331_ARATH</name>
<proteinExistence type="evidence at protein level"/>
<accession>P42643</accession>
<accession>Q945M2</accession>
<accession>Q9M0S7</accession>